<dbReference type="EMBL" id="DQ071615">
    <property type="protein sequence ID" value="AAZ67057.1"/>
    <property type="molecule type" value="Genomic_RNA"/>
</dbReference>
<dbReference type="BMRB" id="Q3I5J0"/>
<dbReference type="SMR" id="Q3I5J0"/>
<dbReference type="Proteomes" id="UP000006570">
    <property type="component" value="Genome"/>
</dbReference>
<dbReference type="GO" id="GO:0044167">
    <property type="term" value="C:host cell endoplasmic reticulum membrane"/>
    <property type="evidence" value="ECO:0007669"/>
    <property type="project" value="UniProtKB-SubCell"/>
</dbReference>
<dbReference type="GO" id="GO:0044173">
    <property type="term" value="C:host cell endoplasmic reticulum-Golgi intermediate compartment membrane"/>
    <property type="evidence" value="ECO:0007669"/>
    <property type="project" value="UniProtKB-SubCell"/>
</dbReference>
<dbReference type="GO" id="GO:0044178">
    <property type="term" value="C:host cell Golgi membrane"/>
    <property type="evidence" value="ECO:0007669"/>
    <property type="project" value="UniProtKB-SubCell"/>
</dbReference>
<dbReference type="GO" id="GO:0016020">
    <property type="term" value="C:membrane"/>
    <property type="evidence" value="ECO:0007669"/>
    <property type="project" value="UniProtKB-KW"/>
</dbReference>
<dbReference type="GO" id="GO:0044423">
    <property type="term" value="C:virion component"/>
    <property type="evidence" value="ECO:0007669"/>
    <property type="project" value="UniProtKB-KW"/>
</dbReference>
<dbReference type="GO" id="GO:0039646">
    <property type="term" value="P:symbiont-mediated perturbation of host cell cycle G0/G1 transition checkpoint"/>
    <property type="evidence" value="ECO:0007669"/>
    <property type="project" value="UniProtKB-KW"/>
</dbReference>
<dbReference type="GO" id="GO:0044071">
    <property type="term" value="P:symbiont-mediated perturbation of host cell cycle progression"/>
    <property type="evidence" value="ECO:0007669"/>
    <property type="project" value="UniProtKB-KW"/>
</dbReference>
<dbReference type="FunFam" id="2.60.40.1550:FF:000001">
    <property type="entry name" value="ORF8"/>
    <property type="match status" value="1"/>
</dbReference>
<dbReference type="Gene3D" id="2.60.40.1550">
    <property type="entry name" value="SARS coronavirus X4"/>
    <property type="match status" value="1"/>
</dbReference>
<dbReference type="InterPro" id="IPR014888">
    <property type="entry name" value="ORF7a_SARS-CoV-like"/>
</dbReference>
<dbReference type="InterPro" id="IPR044871">
    <property type="entry name" value="ORF7a_SARS-CoV-like_X4e"/>
</dbReference>
<dbReference type="InterPro" id="IPR036495">
    <property type="entry name" value="ORF7a_sf_CoV"/>
</dbReference>
<dbReference type="Pfam" id="PF08779">
    <property type="entry name" value="bCoV_NS7A"/>
    <property type="match status" value="1"/>
</dbReference>
<dbReference type="SUPFAM" id="SSF117066">
    <property type="entry name" value="Accessory protein X4 (ORF8, ORF7a)"/>
    <property type="match status" value="1"/>
</dbReference>
<dbReference type="PROSITE" id="PS51919">
    <property type="entry name" value="X4E"/>
    <property type="match status" value="1"/>
</dbReference>
<name>NS7A_BCRP3</name>
<gene>
    <name type="ORF">7a</name>
</gene>
<reference key="1">
    <citation type="journal article" date="2005" name="Science">
        <title>Bats are natural reservoirs of SARS-like coronaviruses.</title>
        <authorList>
            <person name="Li W."/>
            <person name="Shi Z."/>
            <person name="Yu M."/>
            <person name="Ren W."/>
            <person name="Smith C."/>
            <person name="Epstein J.H."/>
            <person name="Wang H."/>
            <person name="Crameri G."/>
            <person name="Hu Z."/>
            <person name="Zhang H."/>
            <person name="Zhang J."/>
            <person name="McEachern J."/>
            <person name="Field H."/>
            <person name="Daszak P."/>
            <person name="Eaton B.T."/>
            <person name="Zhang S."/>
            <person name="Wang L.F."/>
        </authorList>
    </citation>
    <scope>NUCLEOTIDE SEQUENCE [GENOMIC RNA]</scope>
</reference>
<protein>
    <recommendedName>
        <fullName>Protein 7a</fullName>
    </recommendedName>
    <alternativeName>
        <fullName>Accessory protein 7a</fullName>
    </alternativeName>
</protein>
<sequence length="122" mass="13846">MKIILFLTLIALASCELYHYQECVRGTTVLLKEPCPSGTYEGNSPFHPLADNKFALTCTSTHFAFACADGTRHTYQLRARSVSPKLFIRQEEVHQELYSPLFLIVAALVFITLCFTIKRKTE</sequence>
<proteinExistence type="inferred from homology"/>
<accession>Q3I5J0</accession>
<keyword id="KW-1015">Disulfide bond</keyword>
<keyword id="KW-1077">G0/G1 host cell cycle checkpoint dysregulation by virus</keyword>
<keyword id="KW-1038">Host endoplasmic reticulum</keyword>
<keyword id="KW-1040">Host Golgi apparatus</keyword>
<keyword id="KW-1043">Host membrane</keyword>
<keyword id="KW-0945">Host-virus interaction</keyword>
<keyword id="KW-0472">Membrane</keyword>
<keyword id="KW-1121">Modulation of host cell cycle by virus</keyword>
<keyword id="KW-0732">Signal</keyword>
<keyword id="KW-0812">Transmembrane</keyword>
<keyword id="KW-1133">Transmembrane helix</keyword>
<keyword id="KW-0946">Virion</keyword>
<feature type="signal peptide" evidence="1">
    <location>
        <begin position="1"/>
        <end position="15"/>
    </location>
</feature>
<feature type="chain" id="PRO_0000043093" description="Protein 7a">
    <location>
        <begin position="16"/>
        <end position="122"/>
    </location>
</feature>
<feature type="topological domain" description="Virion surface" evidence="2">
    <location>
        <begin position="16"/>
        <end position="96"/>
    </location>
</feature>
<feature type="transmembrane region" description="Helical" evidence="2">
    <location>
        <begin position="97"/>
        <end position="117"/>
    </location>
</feature>
<feature type="topological domain" description="Intravirion" evidence="2">
    <location>
        <begin position="118"/>
        <end position="122"/>
    </location>
</feature>
<feature type="domain" description="X4e" evidence="3">
    <location>
        <begin position="16"/>
        <end position="81"/>
    </location>
</feature>
<feature type="short sequence motif" description="Di-lysine motif" evidence="1">
    <location>
        <begin position="118"/>
        <end position="122"/>
    </location>
</feature>
<feature type="disulfide bond" evidence="3">
    <location>
        <begin position="23"/>
        <end position="58"/>
    </location>
</feature>
<feature type="disulfide bond" evidence="3">
    <location>
        <begin position="35"/>
        <end position="67"/>
    </location>
</feature>
<organism>
    <name type="scientific">Bat coronavirus Rp3/2004</name>
    <name type="common">BtCoV/Rp3/2004</name>
    <name type="synonym">SARS-like coronavirus Rp3</name>
    <dbReference type="NCBI Taxonomy" id="349344"/>
    <lineage>
        <taxon>Viruses</taxon>
        <taxon>Riboviria</taxon>
        <taxon>Orthornavirae</taxon>
        <taxon>Pisuviricota</taxon>
        <taxon>Pisoniviricetes</taxon>
        <taxon>Nidovirales</taxon>
        <taxon>Cornidovirineae</taxon>
        <taxon>Coronaviridae</taxon>
        <taxon>Orthocoronavirinae</taxon>
        <taxon>Betacoronavirus</taxon>
        <taxon>Sarbecovirus</taxon>
        <taxon>Severe acute respiratory syndrome coronavirus</taxon>
    </lineage>
</organism>
<organismHost>
    <name type="scientific">Rhinolophus ferrumequinum</name>
    <name type="common">Greater horseshoe bat</name>
    <dbReference type="NCBI Taxonomy" id="59479"/>
</organismHost>
<organismHost>
    <name type="scientific">Rhinolophus macrotis</name>
    <name type="common">Big-eared horseshoe bat</name>
    <dbReference type="NCBI Taxonomy" id="196889"/>
</organismHost>
<organismHost>
    <name type="scientific">Rhinolophus pearsonii</name>
    <dbReference type="NCBI Taxonomy" id="188571"/>
</organismHost>
<organismHost>
    <name type="scientific">Rhinolophus sinicus</name>
    <name type="common">Chinese rufous horseshoe bat</name>
    <dbReference type="NCBI Taxonomy" id="89399"/>
</organismHost>
<comment type="function">
    <text evidence="1">Non-structural protein which is dispensable for virus replication in cell culture.</text>
</comment>
<comment type="subunit">
    <text evidence="1">Interacts with the spike glycoprotein, M protein, E protein and the accessory protein 3.</text>
</comment>
<comment type="subcellular location">
    <subcellularLocation>
        <location evidence="1">Virion</location>
    </subcellularLocation>
    <subcellularLocation>
        <location evidence="1">Host endoplasmic reticulum membrane</location>
        <topology evidence="1">Single-pass membrane protein</topology>
    </subcellularLocation>
    <subcellularLocation>
        <location evidence="1">Host endoplasmic reticulum-Golgi intermediate compartment membrane</location>
        <topology evidence="1">Single-pass type I membrane protein</topology>
    </subcellularLocation>
    <subcellularLocation>
        <location evidence="1">Host Golgi apparatus membrane</location>
        <topology evidence="1">Single-pass membrane protein</topology>
    </subcellularLocation>
</comment>
<comment type="domain">
    <text evidence="1">The di-lysine motif confers endoplasmic reticulum localization for type I membrane proteins.</text>
</comment>
<comment type="miscellaneous">
    <text>Bat coronavirus rp3 is highly similar to SARS-CoV (SARS-like).</text>
</comment>
<evidence type="ECO:0000250" key="1"/>
<evidence type="ECO:0000255" key="2"/>
<evidence type="ECO:0000255" key="3">
    <source>
        <dbReference type="PROSITE-ProRule" id="PRU01267"/>
    </source>
</evidence>